<reference key="1">
    <citation type="journal article" date="1984" name="J. Mol. Biol.">
        <title>Rhodopseudomonas blastica atp operon. Nucleotide sequence and transcription.</title>
        <authorList>
            <person name="Tybulewicz V.L.J."/>
            <person name="Falk G."/>
            <person name="Walker J.E."/>
        </authorList>
    </citation>
    <scope>NUCLEOTIDE SEQUENCE [GENOMIC DNA]</scope>
</reference>
<comment type="function">
    <text evidence="1">Produces ATP from ADP in the presence of a proton gradient across the membrane. The catalytic sites are hosted primarily by the beta subunits.</text>
</comment>
<comment type="catalytic activity">
    <reaction evidence="1">
        <text>ATP + H2O + 4 H(+)(in) = ADP + phosphate + 5 H(+)(out)</text>
        <dbReference type="Rhea" id="RHEA:57720"/>
        <dbReference type="ChEBI" id="CHEBI:15377"/>
        <dbReference type="ChEBI" id="CHEBI:15378"/>
        <dbReference type="ChEBI" id="CHEBI:30616"/>
        <dbReference type="ChEBI" id="CHEBI:43474"/>
        <dbReference type="ChEBI" id="CHEBI:456216"/>
        <dbReference type="EC" id="7.1.2.2"/>
    </reaction>
</comment>
<comment type="subunit">
    <text evidence="1">F-type ATPases have 2 components, CF(1) - the catalytic core - and CF(0) - the membrane proton channel. CF(1) has five subunits: alpha(3), beta(3), gamma(1), delta(1), epsilon(1). CF(0) has three main subunits: a(1), b(2) and c(9-12). The alpha and beta chains form an alternating ring which encloses part of the gamma chain. CF(1) is attached to CF(0) by a central stalk formed by the gamma and epsilon chains, while a peripheral stalk is formed by the delta and b chains.</text>
</comment>
<comment type="subcellular location">
    <subcellularLocation>
        <location evidence="1">Cell inner membrane</location>
        <topology evidence="1">Peripheral membrane protein</topology>
    </subcellularLocation>
</comment>
<comment type="similarity">
    <text evidence="1">Belongs to the ATPase alpha/beta chains family.</text>
</comment>
<keyword id="KW-0066">ATP synthesis</keyword>
<keyword id="KW-0067">ATP-binding</keyword>
<keyword id="KW-0997">Cell inner membrane</keyword>
<keyword id="KW-1003">Cell membrane</keyword>
<keyword id="KW-0139">CF(1)</keyword>
<keyword id="KW-0375">Hydrogen ion transport</keyword>
<keyword id="KW-0406">Ion transport</keyword>
<keyword id="KW-0472">Membrane</keyword>
<keyword id="KW-0547">Nucleotide-binding</keyword>
<keyword id="KW-1278">Translocase</keyword>
<keyword id="KW-0813">Transport</keyword>
<organism>
    <name type="scientific">Fuscovulum blasticum</name>
    <name type="common">Rhodobacter blasticus</name>
    <name type="synonym">Rhodopseudomonas blastica</name>
    <dbReference type="NCBI Taxonomy" id="1075"/>
    <lineage>
        <taxon>Bacteria</taxon>
        <taxon>Pseudomonadati</taxon>
        <taxon>Pseudomonadota</taxon>
        <taxon>Alphaproteobacteria</taxon>
        <taxon>Rhodobacterales</taxon>
        <taxon>Paracoccaceae</taxon>
        <taxon>Pseudogemmobacter</taxon>
    </lineage>
</organism>
<proteinExistence type="inferred from homology"/>
<gene>
    <name evidence="1" type="primary">atpD</name>
</gene>
<protein>
    <recommendedName>
        <fullName evidence="1">ATP synthase subunit beta</fullName>
        <ecNumber evidence="1">7.1.2.2</ecNumber>
    </recommendedName>
    <alternativeName>
        <fullName evidence="1">ATP synthase F1 sector subunit beta</fullName>
    </alternativeName>
    <alternativeName>
        <fullName evidence="1">F-ATPase subunit beta</fullName>
    </alternativeName>
</protein>
<evidence type="ECO:0000255" key="1">
    <source>
        <dbReference type="HAMAP-Rule" id="MF_01347"/>
    </source>
</evidence>
<dbReference type="EC" id="7.1.2.2" evidence="1"/>
<dbReference type="EMBL" id="Z00018">
    <property type="protein sequence ID" value="CAA77303.1"/>
    <property type="molecule type" value="Genomic_DNA"/>
</dbReference>
<dbReference type="PIR" id="S04675">
    <property type="entry name" value="S04675"/>
</dbReference>
<dbReference type="SMR" id="P05440"/>
<dbReference type="GO" id="GO:0005886">
    <property type="term" value="C:plasma membrane"/>
    <property type="evidence" value="ECO:0007669"/>
    <property type="project" value="UniProtKB-SubCell"/>
</dbReference>
<dbReference type="GO" id="GO:0045259">
    <property type="term" value="C:proton-transporting ATP synthase complex"/>
    <property type="evidence" value="ECO:0007669"/>
    <property type="project" value="UniProtKB-KW"/>
</dbReference>
<dbReference type="GO" id="GO:0005524">
    <property type="term" value="F:ATP binding"/>
    <property type="evidence" value="ECO:0007669"/>
    <property type="project" value="UniProtKB-UniRule"/>
</dbReference>
<dbReference type="GO" id="GO:0016887">
    <property type="term" value="F:ATP hydrolysis activity"/>
    <property type="evidence" value="ECO:0007669"/>
    <property type="project" value="InterPro"/>
</dbReference>
<dbReference type="GO" id="GO:0046933">
    <property type="term" value="F:proton-transporting ATP synthase activity, rotational mechanism"/>
    <property type="evidence" value="ECO:0007669"/>
    <property type="project" value="UniProtKB-UniRule"/>
</dbReference>
<dbReference type="CDD" id="cd18110">
    <property type="entry name" value="ATP-synt_F1_beta_C"/>
    <property type="match status" value="1"/>
</dbReference>
<dbReference type="CDD" id="cd18115">
    <property type="entry name" value="ATP-synt_F1_beta_N"/>
    <property type="match status" value="1"/>
</dbReference>
<dbReference type="CDD" id="cd01133">
    <property type="entry name" value="F1-ATPase_beta_CD"/>
    <property type="match status" value="1"/>
</dbReference>
<dbReference type="FunFam" id="1.10.1140.10:FF:000001">
    <property type="entry name" value="ATP synthase subunit beta"/>
    <property type="match status" value="1"/>
</dbReference>
<dbReference type="FunFam" id="2.40.10.170:FF:000005">
    <property type="entry name" value="ATP synthase subunit beta"/>
    <property type="match status" value="1"/>
</dbReference>
<dbReference type="FunFam" id="3.40.50.300:FF:000026">
    <property type="entry name" value="ATP synthase subunit beta"/>
    <property type="match status" value="1"/>
</dbReference>
<dbReference type="Gene3D" id="2.40.10.170">
    <property type="match status" value="1"/>
</dbReference>
<dbReference type="Gene3D" id="1.10.1140.10">
    <property type="entry name" value="Bovine Mitochondrial F1-atpase, Atp Synthase Beta Chain, Chain D, domain 3"/>
    <property type="match status" value="1"/>
</dbReference>
<dbReference type="Gene3D" id="3.40.50.300">
    <property type="entry name" value="P-loop containing nucleotide triphosphate hydrolases"/>
    <property type="match status" value="1"/>
</dbReference>
<dbReference type="HAMAP" id="MF_01347">
    <property type="entry name" value="ATP_synth_beta_bact"/>
    <property type="match status" value="1"/>
</dbReference>
<dbReference type="InterPro" id="IPR003593">
    <property type="entry name" value="AAA+_ATPase"/>
</dbReference>
<dbReference type="InterPro" id="IPR055190">
    <property type="entry name" value="ATP-synt_VA_C"/>
</dbReference>
<dbReference type="InterPro" id="IPR005722">
    <property type="entry name" value="ATP_synth_F1_bsu"/>
</dbReference>
<dbReference type="InterPro" id="IPR020003">
    <property type="entry name" value="ATPase_a/bsu_AS"/>
</dbReference>
<dbReference type="InterPro" id="IPR050053">
    <property type="entry name" value="ATPase_alpha/beta_chains"/>
</dbReference>
<dbReference type="InterPro" id="IPR004100">
    <property type="entry name" value="ATPase_F1/V1/A1_a/bsu_N"/>
</dbReference>
<dbReference type="InterPro" id="IPR036121">
    <property type="entry name" value="ATPase_F1/V1/A1_a/bsu_N_sf"/>
</dbReference>
<dbReference type="InterPro" id="IPR000194">
    <property type="entry name" value="ATPase_F1/V1/A1_a/bsu_nucl-bd"/>
</dbReference>
<dbReference type="InterPro" id="IPR024034">
    <property type="entry name" value="ATPase_F1/V1_b/a_C"/>
</dbReference>
<dbReference type="InterPro" id="IPR027417">
    <property type="entry name" value="P-loop_NTPase"/>
</dbReference>
<dbReference type="NCBIfam" id="TIGR01039">
    <property type="entry name" value="atpD"/>
    <property type="match status" value="1"/>
</dbReference>
<dbReference type="PANTHER" id="PTHR15184">
    <property type="entry name" value="ATP SYNTHASE"/>
    <property type="match status" value="1"/>
</dbReference>
<dbReference type="PANTHER" id="PTHR15184:SF71">
    <property type="entry name" value="ATP SYNTHASE SUBUNIT BETA, MITOCHONDRIAL"/>
    <property type="match status" value="1"/>
</dbReference>
<dbReference type="Pfam" id="PF00006">
    <property type="entry name" value="ATP-synt_ab"/>
    <property type="match status" value="1"/>
</dbReference>
<dbReference type="Pfam" id="PF02874">
    <property type="entry name" value="ATP-synt_ab_N"/>
    <property type="match status" value="1"/>
</dbReference>
<dbReference type="Pfam" id="PF22919">
    <property type="entry name" value="ATP-synt_VA_C"/>
    <property type="match status" value="1"/>
</dbReference>
<dbReference type="PIRSF" id="PIRSF039072">
    <property type="entry name" value="ATPase_subunit_beta"/>
    <property type="match status" value="1"/>
</dbReference>
<dbReference type="SMART" id="SM00382">
    <property type="entry name" value="AAA"/>
    <property type="match status" value="1"/>
</dbReference>
<dbReference type="SUPFAM" id="SSF47917">
    <property type="entry name" value="C-terminal domain of alpha and beta subunits of F1 ATP synthase"/>
    <property type="match status" value="1"/>
</dbReference>
<dbReference type="SUPFAM" id="SSF50615">
    <property type="entry name" value="N-terminal domain of alpha and beta subunits of F1 ATP synthase"/>
    <property type="match status" value="1"/>
</dbReference>
<dbReference type="SUPFAM" id="SSF52540">
    <property type="entry name" value="P-loop containing nucleoside triphosphate hydrolases"/>
    <property type="match status" value="1"/>
</dbReference>
<dbReference type="PROSITE" id="PS00152">
    <property type="entry name" value="ATPASE_ALPHA_BETA"/>
    <property type="match status" value="1"/>
</dbReference>
<feature type="chain" id="PRO_0000144462" description="ATP synthase subunit beta">
    <location>
        <begin position="1"/>
        <end position="478"/>
    </location>
</feature>
<feature type="binding site" evidence="1">
    <location>
        <begin position="155"/>
        <end position="162"/>
    </location>
    <ligand>
        <name>ATP</name>
        <dbReference type="ChEBI" id="CHEBI:30616"/>
    </ligand>
</feature>
<name>ATPB_FUSBL</name>
<sequence length="478" mass="50803">MTMATTVSKGKVTQVIGAVVDVQFEGVLPAILNALETTNNGKKLILEVAQHLGENTVRCIAMDATEGLVRGAPVSDSGTPISVPVGNATLGRILNVVGEPIDERGPIAATEKRAIHQKAPDFQSQSTESQILVTGIKVIDLLAPYSKGGKIGLFGGAGVGKTVLIQELINNIAKVHSGYSVFAGVGERTREGNDLYHEFIESGVINIDDLEKSKVALVYGQMNEPPGARARVALTGLTLAEQFRDQSGTDVLFFVDNIFRFTQAGSEVSALLGRIPSAVGYQPTLATDMGQLQERITSTKAGSITSVQAIYVPADDLTDPAPATSFAHLDATTTLSRAISELGIYPAVDPLDSTSRLMDPQILGEEHYNTARAVQGILQRYKSLQDIIAILGMDELSEEDKLTVARARKIQRFLSQPFDVAQVFTGSPGVQVPLDKTIASFKAVVAGEYDHLPEAAFYMVGDIEEAKAKAAKLAAAAA</sequence>
<accession>P05440</accession>